<evidence type="ECO:0000250" key="1">
    <source>
        <dbReference type="UniProtKB" id="P23371"/>
    </source>
</evidence>
<evidence type="ECO:0000255" key="2">
    <source>
        <dbReference type="PIRSR" id="PIRSR015693-50"/>
    </source>
</evidence>
<evidence type="ECO:0000305" key="3"/>
<organism>
    <name type="scientific">Rabbitpox virus (strain Utrecht)</name>
    <name type="common">RPV</name>
    <dbReference type="NCBI Taxonomy" id="45417"/>
    <lineage>
        <taxon>Viruses</taxon>
        <taxon>Varidnaviria</taxon>
        <taxon>Bamfordvirae</taxon>
        <taxon>Nucleocytoviricota</taxon>
        <taxon>Pokkesviricetes</taxon>
        <taxon>Chitovirales</taxon>
        <taxon>Poxviridae</taxon>
        <taxon>Chordopoxvirinae</taxon>
        <taxon>Orthopoxvirus</taxon>
        <taxon>Vaccinia virus</taxon>
    </lineage>
</organism>
<name>PAP1_RABPU</name>
<organismHost>
    <name type="scientific">Oryctolagus cuniculus</name>
    <name type="common">Rabbit</name>
    <dbReference type="NCBI Taxonomy" id="9986"/>
</organismHost>
<dbReference type="EC" id="2.7.7.19"/>
<dbReference type="EMBL" id="AY484669">
    <property type="protein sequence ID" value="AAS49759.1"/>
    <property type="molecule type" value="Genomic_DNA"/>
</dbReference>
<dbReference type="SMR" id="Q6RZP5"/>
<dbReference type="Proteomes" id="UP000166173">
    <property type="component" value="Segment"/>
</dbReference>
<dbReference type="GO" id="GO:0005524">
    <property type="term" value="F:ATP binding"/>
    <property type="evidence" value="ECO:0007669"/>
    <property type="project" value="UniProtKB-KW"/>
</dbReference>
<dbReference type="GO" id="GO:0046872">
    <property type="term" value="F:metal ion binding"/>
    <property type="evidence" value="ECO:0007669"/>
    <property type="project" value="UniProtKB-KW"/>
</dbReference>
<dbReference type="GO" id="GO:1990817">
    <property type="term" value="F:poly(A) RNA polymerase activity"/>
    <property type="evidence" value="ECO:0007669"/>
    <property type="project" value="UniProtKB-EC"/>
</dbReference>
<dbReference type="GO" id="GO:0006397">
    <property type="term" value="P:mRNA processing"/>
    <property type="evidence" value="ECO:0007669"/>
    <property type="project" value="UniProtKB-KW"/>
</dbReference>
<dbReference type="CDD" id="cd20919">
    <property type="entry name" value="polyA_pol_Pox"/>
    <property type="match status" value="1"/>
</dbReference>
<dbReference type="Gene3D" id="1.20.1270.320">
    <property type="entry name" value="Poxvirus poly(A) polymerase, N domain"/>
    <property type="match status" value="1"/>
</dbReference>
<dbReference type="Gene3D" id="3.30.460.60">
    <property type="entry name" value="Poxvirus poly(A) polymerase, nucleotidyltransferase domain"/>
    <property type="match status" value="1"/>
</dbReference>
<dbReference type="InterPro" id="IPR004976">
    <property type="entry name" value="PolyA_pol_cat_Poxvir"/>
</dbReference>
<dbReference type="InterPro" id="IPR037265">
    <property type="entry name" value="PolyA_pol_cat_sf"/>
</dbReference>
<dbReference type="InterPro" id="IPR024231">
    <property type="entry name" value="PolyA_pol_nucTrfase_Poxvir"/>
</dbReference>
<dbReference type="InterPro" id="IPR038419">
    <property type="entry name" value="PolyA_pol_nucTrfase_sf_Poxvir"/>
</dbReference>
<dbReference type="InterPro" id="IPR024397">
    <property type="entry name" value="Poxvirus_polyA_pol_cat_C"/>
</dbReference>
<dbReference type="InterPro" id="IPR024398">
    <property type="entry name" value="Poxvirus_polyA_pol_cat_N"/>
</dbReference>
<dbReference type="InterPro" id="IPR038337">
    <property type="entry name" value="Poxvirus_polyA_pol_cat_N_sf"/>
</dbReference>
<dbReference type="Pfam" id="PF03296">
    <property type="entry name" value="Pox_polyA_pol"/>
    <property type="match status" value="1"/>
</dbReference>
<dbReference type="Pfam" id="PF12629">
    <property type="entry name" value="Pox_polyA_pol_C"/>
    <property type="match status" value="1"/>
</dbReference>
<dbReference type="Pfam" id="PF12630">
    <property type="entry name" value="Pox_polyA_pol_N"/>
    <property type="match status" value="1"/>
</dbReference>
<dbReference type="PIRSF" id="PIRSF015693">
    <property type="entry name" value="VAC-48L_nuct"/>
    <property type="match status" value="1"/>
</dbReference>
<dbReference type="SUPFAM" id="SSF160957">
    <property type="entry name" value="Poly(A) polymerase catalytic subunit-like"/>
    <property type="match status" value="1"/>
</dbReference>
<reference key="1">
    <citation type="journal article" date="2005" name="J. Gen. Virol.">
        <title>Complete coding sequences of the rabbitpox virus genome.</title>
        <authorList>
            <person name="Li G."/>
            <person name="Chen N."/>
            <person name="Roper R.L."/>
            <person name="Feng Z."/>
            <person name="Hunter A.L."/>
            <person name="Danila M."/>
            <person name="Lefkowitz E.J."/>
            <person name="Buller R.M.L."/>
            <person name="Upton C."/>
        </authorList>
    </citation>
    <scope>NUCLEOTIDE SEQUENCE [LARGE SCALE GENOMIC DNA]</scope>
</reference>
<gene>
    <name type="primary">OPG063</name>
    <name type="synonym">PAPL</name>
    <name type="ordered locus">RPXV046</name>
</gene>
<proteinExistence type="inferred from homology"/>
<sequence>MNRNPDQNTLPNITLKIIETYLGRVPSVNEYHMLKLQARNIQKITVFNKDIFVSLVKKNKKRFFSDVDTSASEIKDRILSYFSKQTQTYNIGKLFTIIELQSVLVTTYTDILGVLTIKAPNVISSKISYNVTSMEELARDMLNSMNVAVIDKAKVMGRHNVSSLVKNVNKLMEEYLRRHNKSCICYGSYSLYLINPNIRYGDIDILQTNSRTFLIDLAFLIKFITGNNIILSKIPYLRNYMVIKDENDNHIIDSFNIRQDTMNVVPKIFIDNIYIVDPTFQLLNMIKMFSQIDRLEDLSKDPEKFNARMATMLEYVRYTHGIVFDGKRNNMPMKCIIDENNRIVTVTTKDYFSFKKCLVYLDENVLSSDILDLNADTSCDFESVTNSVYLIHDNIMYTYFSNTILLSDKGKVHEISARGLCAHILLYQMLTSGEYKQCLSDLLNSMMNRDKIPIYSHTERDKKPGRHGFINIEKDIIVF</sequence>
<keyword id="KW-0067">ATP-binding</keyword>
<keyword id="KW-0106">Calcium</keyword>
<keyword id="KW-0244">Early protein</keyword>
<keyword id="KW-0479">Metal-binding</keyword>
<keyword id="KW-0507">mRNA processing</keyword>
<keyword id="KW-0547">Nucleotide-binding</keyword>
<keyword id="KW-0804">Transcription</keyword>
<keyword id="KW-0808">Transferase</keyword>
<feature type="chain" id="PRO_0000308938" description="Poly(A) polymerase catalytic subunit">
    <location>
        <begin position="1"/>
        <end position="479"/>
    </location>
</feature>
<feature type="active site" evidence="2">
    <location>
        <position position="202"/>
    </location>
</feature>
<feature type="active site" evidence="2">
    <location>
        <position position="204"/>
    </location>
</feature>
<feature type="binding site" evidence="1">
    <location>
        <position position="202"/>
    </location>
    <ligand>
        <name>Ca(2+)</name>
        <dbReference type="ChEBI" id="CHEBI:29108"/>
        <label>1</label>
    </ligand>
</feature>
<feature type="binding site" evidence="1">
    <location>
        <position position="202"/>
    </location>
    <ligand>
        <name>Ca(2+)</name>
        <dbReference type="ChEBI" id="CHEBI:29108"/>
        <label>2</label>
    </ligand>
</feature>
<feature type="binding site" evidence="1">
    <location>
        <position position="204"/>
    </location>
    <ligand>
        <name>Ca(2+)</name>
        <dbReference type="ChEBI" id="CHEBI:29108"/>
        <label>1</label>
    </ligand>
</feature>
<feature type="binding site" evidence="1">
    <location>
        <position position="204"/>
    </location>
    <ligand>
        <name>Ca(2+)</name>
        <dbReference type="ChEBI" id="CHEBI:29108"/>
        <label>2</label>
    </ligand>
</feature>
<feature type="binding site" evidence="1">
    <location>
        <position position="253"/>
    </location>
    <ligand>
        <name>Ca(2+)</name>
        <dbReference type="ChEBI" id="CHEBI:29108"/>
        <label>2</label>
    </ligand>
</feature>
<accession>Q6RZP5</accession>
<comment type="function">
    <text evidence="1">Polymerase that creates the 3'-poly(A) tail of mRNA's.</text>
</comment>
<comment type="catalytic activity">
    <reaction evidence="1">
        <text>RNA(n) + ATP = RNA(n)-3'-adenine ribonucleotide + diphosphate</text>
        <dbReference type="Rhea" id="RHEA:11332"/>
        <dbReference type="Rhea" id="RHEA-COMP:14527"/>
        <dbReference type="Rhea" id="RHEA-COMP:17347"/>
        <dbReference type="ChEBI" id="CHEBI:30616"/>
        <dbReference type="ChEBI" id="CHEBI:33019"/>
        <dbReference type="ChEBI" id="CHEBI:140395"/>
        <dbReference type="ChEBI" id="CHEBI:173115"/>
        <dbReference type="EC" id="2.7.7.19"/>
    </reaction>
</comment>
<comment type="subunit">
    <text evidence="1">Heterodimer of a large (catalytic) subunit and a small (regulatory) subunit.</text>
</comment>
<comment type="induction">
    <text evidence="1">Expressed in the early phase of the viral replicative cycle.</text>
</comment>
<comment type="similarity">
    <text evidence="3">Belongs to the poxviridae poly(A) polymerase catalytic subunit family.</text>
</comment>
<protein>
    <recommendedName>
        <fullName>Poly(A) polymerase catalytic subunit</fullName>
        <ecNumber>2.7.7.19</ecNumber>
    </recommendedName>
    <alternativeName>
        <fullName>Poly(A) polymerase large subunit</fullName>
        <shortName>PAP-L</shortName>
    </alternativeName>
</protein>